<reference key="1">
    <citation type="journal article" date="2011" name="J. Bacteriol.">
        <title>Comparative genomics of 28 Salmonella enterica isolates: evidence for CRISPR-mediated adaptive sublineage evolution.</title>
        <authorList>
            <person name="Fricke W.F."/>
            <person name="Mammel M.K."/>
            <person name="McDermott P.F."/>
            <person name="Tartera C."/>
            <person name="White D.G."/>
            <person name="Leclerc J.E."/>
            <person name="Ravel J."/>
            <person name="Cebula T.A."/>
        </authorList>
    </citation>
    <scope>NUCLEOTIDE SEQUENCE [LARGE SCALE GENOMIC DNA]</scope>
    <source>
        <strain>SL254</strain>
    </source>
</reference>
<proteinExistence type="inferred from homology"/>
<dbReference type="EMBL" id="CP001113">
    <property type="protein sequence ID" value="ACF62122.1"/>
    <property type="molecule type" value="Genomic_DNA"/>
</dbReference>
<dbReference type="RefSeq" id="WP_001112990.1">
    <property type="nucleotide sequence ID" value="NZ_CCMR01000001.1"/>
</dbReference>
<dbReference type="SMR" id="B4T2C3"/>
<dbReference type="KEGG" id="see:SNSL254_A2899"/>
<dbReference type="HOGENOM" id="CLU_150721_1_0_6"/>
<dbReference type="Proteomes" id="UP000008824">
    <property type="component" value="Chromosome"/>
</dbReference>
<dbReference type="Gene3D" id="3.10.20.280">
    <property type="entry name" value="RnfH-like"/>
    <property type="match status" value="1"/>
</dbReference>
<dbReference type="HAMAP" id="MF_00460">
    <property type="entry name" value="UPF0125_RnfH"/>
    <property type="match status" value="1"/>
</dbReference>
<dbReference type="InterPro" id="IPR016155">
    <property type="entry name" value="Mopterin_synth/thiamin_S_b"/>
</dbReference>
<dbReference type="InterPro" id="IPR005346">
    <property type="entry name" value="RnfH"/>
</dbReference>
<dbReference type="InterPro" id="IPR037021">
    <property type="entry name" value="RnfH_sf"/>
</dbReference>
<dbReference type="NCBIfam" id="NF002490">
    <property type="entry name" value="PRK01777.1"/>
    <property type="match status" value="1"/>
</dbReference>
<dbReference type="PANTHER" id="PTHR37483">
    <property type="entry name" value="UPF0125 PROTEIN RATB"/>
    <property type="match status" value="1"/>
</dbReference>
<dbReference type="PANTHER" id="PTHR37483:SF1">
    <property type="entry name" value="UPF0125 PROTEIN RATB"/>
    <property type="match status" value="1"/>
</dbReference>
<dbReference type="Pfam" id="PF03658">
    <property type="entry name" value="Ub-RnfH"/>
    <property type="match status" value="1"/>
</dbReference>
<dbReference type="SUPFAM" id="SSF54285">
    <property type="entry name" value="MoaD/ThiS"/>
    <property type="match status" value="1"/>
</dbReference>
<gene>
    <name evidence="1" type="primary">rnfH</name>
    <name type="ordered locus">SNSL254_A2899</name>
</gene>
<evidence type="ECO:0000255" key="1">
    <source>
        <dbReference type="HAMAP-Rule" id="MF_00460"/>
    </source>
</evidence>
<name>RNFH_SALNS</name>
<protein>
    <recommendedName>
        <fullName evidence="1">Protein RnfH</fullName>
    </recommendedName>
</protein>
<comment type="similarity">
    <text evidence="1">Belongs to the UPF0125 (RnfH) family.</text>
</comment>
<feature type="chain" id="PRO_1000200196" description="Protein RnfH">
    <location>
        <begin position="1"/>
        <end position="96"/>
    </location>
</feature>
<organism>
    <name type="scientific">Salmonella newport (strain SL254)</name>
    <dbReference type="NCBI Taxonomy" id="423368"/>
    <lineage>
        <taxon>Bacteria</taxon>
        <taxon>Pseudomonadati</taxon>
        <taxon>Pseudomonadota</taxon>
        <taxon>Gammaproteobacteria</taxon>
        <taxon>Enterobacterales</taxon>
        <taxon>Enterobacteriaceae</taxon>
        <taxon>Salmonella</taxon>
    </lineage>
</organism>
<sequence>MPDKLVVEVAYALPEKQYLQRVTLEEGATVEEAIRASGLLELRTDIDLAKNKVGIYSRPVKLTDTVQDGDRVEIYRPLIADPKALRRQRAEKSAGR</sequence>
<accession>B4T2C3</accession>